<reference key="1">
    <citation type="journal article" date="2001" name="Lancet">
        <title>Whole genome sequencing of meticillin-resistant Staphylococcus aureus.</title>
        <authorList>
            <person name="Kuroda M."/>
            <person name="Ohta T."/>
            <person name="Uchiyama I."/>
            <person name="Baba T."/>
            <person name="Yuzawa H."/>
            <person name="Kobayashi I."/>
            <person name="Cui L."/>
            <person name="Oguchi A."/>
            <person name="Aoki K."/>
            <person name="Nagai Y."/>
            <person name="Lian J.-Q."/>
            <person name="Ito T."/>
            <person name="Kanamori M."/>
            <person name="Matsumaru H."/>
            <person name="Maruyama A."/>
            <person name="Murakami H."/>
            <person name="Hosoyama A."/>
            <person name="Mizutani-Ui Y."/>
            <person name="Takahashi N.K."/>
            <person name="Sawano T."/>
            <person name="Inoue R."/>
            <person name="Kaito C."/>
            <person name="Sekimizu K."/>
            <person name="Hirakawa H."/>
            <person name="Kuhara S."/>
            <person name="Goto S."/>
            <person name="Yabuzaki J."/>
            <person name="Kanehisa M."/>
            <person name="Yamashita A."/>
            <person name="Oshima K."/>
            <person name="Furuya K."/>
            <person name="Yoshino C."/>
            <person name="Shiba T."/>
            <person name="Hattori M."/>
            <person name="Ogasawara N."/>
            <person name="Hayashi H."/>
            <person name="Hiramatsu K."/>
        </authorList>
    </citation>
    <scope>NUCLEOTIDE SEQUENCE [LARGE SCALE GENOMIC DNA]</scope>
    <source>
        <strain>Mu50 / ATCC 700699</strain>
    </source>
</reference>
<proteinExistence type="inferred from homology"/>
<dbReference type="EC" id="2.5.1.-" evidence="1"/>
<dbReference type="EMBL" id="BA000017">
    <property type="protein sequence ID" value="BAB58495.1"/>
    <property type="molecule type" value="Genomic_DNA"/>
</dbReference>
<dbReference type="RefSeq" id="WP_000920239.1">
    <property type="nucleotide sequence ID" value="NC_002758.2"/>
</dbReference>
<dbReference type="SMR" id="P60863"/>
<dbReference type="KEGG" id="sav:SAV2333"/>
<dbReference type="HOGENOM" id="CLU_121356_0_0_9"/>
<dbReference type="PhylomeDB" id="P60863"/>
<dbReference type="Proteomes" id="UP000002481">
    <property type="component" value="Chromosome"/>
</dbReference>
<dbReference type="GO" id="GO:0005737">
    <property type="term" value="C:cytoplasm"/>
    <property type="evidence" value="ECO:0007669"/>
    <property type="project" value="UniProtKB-SubCell"/>
</dbReference>
<dbReference type="GO" id="GO:0000287">
    <property type="term" value="F:magnesium ion binding"/>
    <property type="evidence" value="ECO:0007669"/>
    <property type="project" value="UniProtKB-UniRule"/>
</dbReference>
<dbReference type="GO" id="GO:0016765">
    <property type="term" value="F:transferase activity, transferring alkyl or aryl (other than methyl) groups"/>
    <property type="evidence" value="ECO:0007669"/>
    <property type="project" value="UniProtKB-UniRule"/>
</dbReference>
<dbReference type="GO" id="GO:0046677">
    <property type="term" value="P:response to antibiotic"/>
    <property type="evidence" value="ECO:0007669"/>
    <property type="project" value="UniProtKB-UniRule"/>
</dbReference>
<dbReference type="Gene3D" id="3.10.180.10">
    <property type="entry name" value="2,3-Dihydroxybiphenyl 1,2-Dioxygenase, domain 1"/>
    <property type="match status" value="1"/>
</dbReference>
<dbReference type="HAMAP" id="MF_01512">
    <property type="entry name" value="FosB"/>
    <property type="match status" value="1"/>
</dbReference>
<dbReference type="InterPro" id="IPR051332">
    <property type="entry name" value="Fosfomycin_Res_Enzymes"/>
</dbReference>
<dbReference type="InterPro" id="IPR029068">
    <property type="entry name" value="Glyas_Bleomycin-R_OHBP_Dase"/>
</dbReference>
<dbReference type="InterPro" id="IPR004360">
    <property type="entry name" value="Glyas_Fos-R_dOase_dom"/>
</dbReference>
<dbReference type="InterPro" id="IPR022858">
    <property type="entry name" value="Metallothiol_Trafse_FosB"/>
</dbReference>
<dbReference type="InterPro" id="IPR037523">
    <property type="entry name" value="VOC"/>
</dbReference>
<dbReference type="NCBIfam" id="NF000493">
    <property type="entry name" value="Fos_BSH"/>
    <property type="match status" value="1"/>
</dbReference>
<dbReference type="NCBIfam" id="NF003152">
    <property type="entry name" value="PRK04101.1"/>
    <property type="match status" value="1"/>
</dbReference>
<dbReference type="PANTHER" id="PTHR36113:SF6">
    <property type="entry name" value="FOSFOMYCIN RESISTANCE PROTEIN FOSX"/>
    <property type="match status" value="1"/>
</dbReference>
<dbReference type="PANTHER" id="PTHR36113">
    <property type="entry name" value="LYASE, PUTATIVE-RELATED-RELATED"/>
    <property type="match status" value="1"/>
</dbReference>
<dbReference type="Pfam" id="PF00903">
    <property type="entry name" value="Glyoxalase"/>
    <property type="match status" value="1"/>
</dbReference>
<dbReference type="SUPFAM" id="SSF54593">
    <property type="entry name" value="Glyoxalase/Bleomycin resistance protein/Dihydroxybiphenyl dioxygenase"/>
    <property type="match status" value="1"/>
</dbReference>
<dbReference type="PROSITE" id="PS51819">
    <property type="entry name" value="VOC"/>
    <property type="match status" value="1"/>
</dbReference>
<sequence length="139" mass="16648">MLKSINHICFSVRNLNDSIHFYRDILLGKLLLTGKKTAYFELAGLWIALNEEKDIPRNEIHFSYTHIAFTIDDSEFKYWHQRLKDNNVNILEGRVRDIRDRQSIYFTDPDGHKLELHTGTLENRLNYYKEAKPHMTFYK</sequence>
<evidence type="ECO:0000255" key="1">
    <source>
        <dbReference type="HAMAP-Rule" id="MF_01512"/>
    </source>
</evidence>
<evidence type="ECO:0000255" key="2">
    <source>
        <dbReference type="PROSITE-ProRule" id="PRU01163"/>
    </source>
</evidence>
<keyword id="KW-0046">Antibiotic resistance</keyword>
<keyword id="KW-0963">Cytoplasm</keyword>
<keyword id="KW-0460">Magnesium</keyword>
<keyword id="KW-0479">Metal-binding</keyword>
<keyword id="KW-0808">Transferase</keyword>
<protein>
    <recommendedName>
        <fullName evidence="1">Metallothiol transferase FosB</fullName>
        <ecNumber evidence="1">2.5.1.-</ecNumber>
    </recommendedName>
    <alternativeName>
        <fullName evidence="1">Fosfomycin resistance protein</fullName>
    </alternativeName>
</protein>
<feature type="chain" id="PRO_0000164035" description="Metallothiol transferase FosB">
    <location>
        <begin position="1"/>
        <end position="139"/>
    </location>
</feature>
<feature type="domain" description="VOC" evidence="2">
    <location>
        <begin position="4"/>
        <end position="119"/>
    </location>
</feature>
<feature type="active site" description="Proton donor/acceptor" evidence="2">
    <location>
        <position position="115"/>
    </location>
</feature>
<feature type="binding site" evidence="1">
    <location>
        <position position="7"/>
    </location>
    <ligand>
        <name>Mg(2+)</name>
        <dbReference type="ChEBI" id="CHEBI:18420"/>
    </ligand>
</feature>
<feature type="binding site" evidence="1">
    <location>
        <position position="66"/>
    </location>
    <ligand>
        <name>Mg(2+)</name>
        <dbReference type="ChEBI" id="CHEBI:18420"/>
    </ligand>
</feature>
<feature type="binding site" evidence="1">
    <location>
        <position position="115"/>
    </location>
    <ligand>
        <name>Mg(2+)</name>
        <dbReference type="ChEBI" id="CHEBI:18420"/>
    </ligand>
</feature>
<gene>
    <name evidence="1" type="primary">fosB</name>
    <name type="ordered locus">SAV2333</name>
</gene>
<organism>
    <name type="scientific">Staphylococcus aureus (strain Mu50 / ATCC 700699)</name>
    <dbReference type="NCBI Taxonomy" id="158878"/>
    <lineage>
        <taxon>Bacteria</taxon>
        <taxon>Bacillati</taxon>
        <taxon>Bacillota</taxon>
        <taxon>Bacilli</taxon>
        <taxon>Bacillales</taxon>
        <taxon>Staphylococcaceae</taxon>
        <taxon>Staphylococcus</taxon>
    </lineage>
</organism>
<name>FOSB_STAAM</name>
<accession>P60863</accession>
<accession>Q99RU0</accession>
<comment type="function">
    <text evidence="1">Metallothiol transferase which confers resistance to fosfomycin by catalyzing the addition of a thiol cofactor to fosfomycin. L-cysteine is probably the physiological thiol donor.</text>
</comment>
<comment type="cofactor">
    <cofactor evidence="1">
        <name>Mg(2+)</name>
        <dbReference type="ChEBI" id="CHEBI:18420"/>
    </cofactor>
</comment>
<comment type="subunit">
    <text evidence="1">Homodimer.</text>
</comment>
<comment type="subcellular location">
    <subcellularLocation>
        <location evidence="1">Cytoplasm</location>
    </subcellularLocation>
</comment>
<comment type="similarity">
    <text evidence="1">Belongs to the fosfomycin resistance protein family. FosB subfamily.</text>
</comment>